<proteinExistence type="evidence at transcript level"/>
<evidence type="ECO:0000250" key="1"/>
<evidence type="ECO:0000305" key="2"/>
<protein>
    <recommendedName>
        <fullName>Probable thiamine biosynthetic bifunctional enzyme</fullName>
    </recommendedName>
    <domain>
        <recommendedName>
            <fullName>Thiamine-phosphate synthase</fullName>
            <shortName>TP synthase</shortName>
            <shortName>TPS</shortName>
            <ecNumber>2.5.1.3</ecNumber>
        </recommendedName>
        <alternativeName>
            <fullName>Thiamine-phosphate pyrophosphorylase</fullName>
            <shortName>TMP pyrophosphorylase</shortName>
            <shortName>TMP-PPase</shortName>
        </alternativeName>
    </domain>
    <domain>
        <recommendedName>
            <fullName>Hydroxyethylthiazole kinase</fullName>
            <ecNumber>2.7.1.50</ecNumber>
        </recommendedName>
        <alternativeName>
            <fullName>4-methyl-5-beta-hydroxyethylthiazole kinase</fullName>
            <shortName>TH kinase</shortName>
            <shortName>THZ kinase</shortName>
        </alternativeName>
    </domain>
</protein>
<feature type="chain" id="PRO_0000157089" description="Probable thiamine biosynthetic bifunctional enzyme">
    <location>
        <begin position="1"/>
        <end position="518"/>
    </location>
</feature>
<feature type="region of interest" description="Thiamine-phosphate synthase">
    <location>
        <begin position="1"/>
        <end position="229"/>
    </location>
</feature>
<feature type="region of interest" description="Hydroxyethylthiazole kinase">
    <location>
        <begin position="230"/>
        <end position="518"/>
    </location>
</feature>
<feature type="active site" description="Proton acceptor; for hydroxyethylthiazole kinase activity" evidence="1">
    <location>
        <position position="433"/>
    </location>
</feature>
<feature type="binding site" evidence="1">
    <location>
        <begin position="40"/>
        <end position="44"/>
    </location>
    <ligand>
        <name>4-amino-2-methyl-5-(diphosphooxymethyl)pyrimidine</name>
        <dbReference type="ChEBI" id="CHEBI:57841"/>
    </ligand>
</feature>
<feature type="binding site" evidence="1">
    <location>
        <position position="72"/>
    </location>
    <ligand>
        <name>4-amino-2-methyl-5-(diphosphooxymethyl)pyrimidine</name>
        <dbReference type="ChEBI" id="CHEBI:57841"/>
    </ligand>
</feature>
<feature type="binding site" evidence="1">
    <location>
        <position position="73"/>
    </location>
    <ligand>
        <name>Mg(2+)</name>
        <dbReference type="ChEBI" id="CHEBI:18420"/>
    </ligand>
</feature>
<feature type="binding site" evidence="1">
    <location>
        <position position="92"/>
    </location>
    <ligand>
        <name>Mg(2+)</name>
        <dbReference type="ChEBI" id="CHEBI:18420"/>
    </ligand>
</feature>
<feature type="binding site" evidence="1">
    <location>
        <position position="111"/>
    </location>
    <ligand>
        <name>4-amino-2-methyl-5-(diphosphooxymethyl)pyrimidine</name>
        <dbReference type="ChEBI" id="CHEBI:57841"/>
    </ligand>
</feature>
<feature type="binding site" evidence="1">
    <location>
        <begin position="137"/>
        <end position="139"/>
    </location>
    <ligand>
        <name>2-[(2R,5Z)-2-carboxy-4-methylthiazol-5(2H)-ylidene]ethyl phosphate</name>
        <dbReference type="ChEBI" id="CHEBI:62899"/>
    </ligand>
</feature>
<feature type="binding site" evidence="1">
    <location>
        <position position="140"/>
    </location>
    <ligand>
        <name>4-amino-2-methyl-5-(diphosphooxymethyl)pyrimidine</name>
        <dbReference type="ChEBI" id="CHEBI:57841"/>
    </ligand>
</feature>
<feature type="binding site" evidence="1">
    <location>
        <position position="173"/>
    </location>
    <ligand>
        <name>2-[(2R,5Z)-2-carboxy-4-methylthiazol-5(2H)-ylidene]ethyl phosphate</name>
        <dbReference type="ChEBI" id="CHEBI:62899"/>
    </ligand>
</feature>
<feature type="binding site" evidence="1">
    <location>
        <begin position="199"/>
        <end position="200"/>
    </location>
    <ligand>
        <name>2-[(2R,5Z)-2-carboxy-4-methylthiazol-5(2H)-ylidene]ethyl phosphate</name>
        <dbReference type="ChEBI" id="CHEBI:62899"/>
    </ligand>
</feature>
<feature type="binding site" evidence="1">
    <location>
        <position position="281"/>
    </location>
    <ligand>
        <name>5-(2-hydroxyethyl)-4-methylthiazole</name>
        <dbReference type="ChEBI" id="CHEBI:17957"/>
    </ligand>
</feature>
<feature type="binding site" evidence="1">
    <location>
        <position position="355"/>
    </location>
    <ligand>
        <name>ATP</name>
        <dbReference type="ChEBI" id="CHEBI:30616"/>
    </ligand>
</feature>
<feature type="binding site" evidence="1">
    <location>
        <position position="403"/>
    </location>
    <ligand>
        <name>ATP</name>
        <dbReference type="ChEBI" id="CHEBI:30616"/>
    </ligand>
</feature>
<feature type="binding site" evidence="1">
    <location>
        <position position="430"/>
    </location>
    <ligand>
        <name>5-(2-hydroxyethyl)-4-methylthiazole</name>
        <dbReference type="ChEBI" id="CHEBI:17957"/>
    </ligand>
</feature>
<sequence>MKRQIDYSLYLVTSSSLIAPGSTIERQVEEGILGGVTLVQHREKDISTKCFVERAKRLSEICKKYDVPFLINDRIDVALAVGADGVHIGQDDMDCALARKILGDDAIIGVSTNNIEEIEKAAADGADYVGIGSIYETNTKDVKDRLIGITGLRKILEHVSKMHCQLGTVAIAGLNSSNIQRVIYLSEANGKRIDGIALVSAIMCSITPRETAKELRNLIATPPCFAQARSSLTTPKDLLNQIPAALQKLKDFTPLIHHLTNAVAKNFSANVTLAAYGSPTMGESYDEVADFAKAPGALVLNIGILENTKTYIHAAQVNNDLARPVILDPVAVGATTARSKVINTLLNYAYYDIIKGNEGEIMNLAGEQGLMRGVDSISQHTLAARITAVHRLAVERRCVVAMSGAVDVISDGNSTYVIKNGNPLLGQITASGCSLGSVMGVTASICQNDKLLAAITATLLYNIASELAVEAKNSCGDLLVQGPGTFIPIFVDKLHQLINETIKGNVDWIERAKLEKAE</sequence>
<comment type="function">
    <text evidence="1">Condenses 4-methyl-5-(beta-hydroxyethyl)thiazole monophosphate (THZ-P) and 2-methyl-4-amino-5-hydroxymethyl pyrimidine pyrophosphate (HMP-PP) to form thiamine monophosphate (TMP).</text>
</comment>
<comment type="catalytic activity">
    <reaction>
        <text>2-[(2R,5Z)-2-carboxy-4-methylthiazol-5(2H)-ylidene]ethyl phosphate + 4-amino-2-methyl-5-(diphosphooxymethyl)pyrimidine + 2 H(+) = thiamine phosphate + CO2 + diphosphate</text>
        <dbReference type="Rhea" id="RHEA:47844"/>
        <dbReference type="ChEBI" id="CHEBI:15378"/>
        <dbReference type="ChEBI" id="CHEBI:16526"/>
        <dbReference type="ChEBI" id="CHEBI:33019"/>
        <dbReference type="ChEBI" id="CHEBI:37575"/>
        <dbReference type="ChEBI" id="CHEBI:57841"/>
        <dbReference type="ChEBI" id="CHEBI:62899"/>
        <dbReference type="EC" id="2.5.1.3"/>
    </reaction>
</comment>
<comment type="catalytic activity">
    <reaction>
        <text>2-(2-carboxy-4-methylthiazol-5-yl)ethyl phosphate + 4-amino-2-methyl-5-(diphosphooxymethyl)pyrimidine + 2 H(+) = thiamine phosphate + CO2 + diphosphate</text>
        <dbReference type="Rhea" id="RHEA:47848"/>
        <dbReference type="ChEBI" id="CHEBI:15378"/>
        <dbReference type="ChEBI" id="CHEBI:16526"/>
        <dbReference type="ChEBI" id="CHEBI:33019"/>
        <dbReference type="ChEBI" id="CHEBI:37575"/>
        <dbReference type="ChEBI" id="CHEBI:57841"/>
        <dbReference type="ChEBI" id="CHEBI:62890"/>
        <dbReference type="EC" id="2.5.1.3"/>
    </reaction>
</comment>
<comment type="catalytic activity">
    <reaction>
        <text>4-methyl-5-(2-phosphooxyethyl)-thiazole + 4-amino-2-methyl-5-(diphosphooxymethyl)pyrimidine + H(+) = thiamine phosphate + diphosphate</text>
        <dbReference type="Rhea" id="RHEA:22328"/>
        <dbReference type="ChEBI" id="CHEBI:15378"/>
        <dbReference type="ChEBI" id="CHEBI:33019"/>
        <dbReference type="ChEBI" id="CHEBI:37575"/>
        <dbReference type="ChEBI" id="CHEBI:57841"/>
        <dbReference type="ChEBI" id="CHEBI:58296"/>
        <dbReference type="EC" id="2.5.1.3"/>
    </reaction>
</comment>
<comment type="catalytic activity">
    <reaction>
        <text>5-(2-hydroxyethyl)-4-methylthiazole + ATP = 4-methyl-5-(2-phosphooxyethyl)-thiazole + ADP + H(+)</text>
        <dbReference type="Rhea" id="RHEA:24212"/>
        <dbReference type="ChEBI" id="CHEBI:15378"/>
        <dbReference type="ChEBI" id="CHEBI:17957"/>
        <dbReference type="ChEBI" id="CHEBI:30616"/>
        <dbReference type="ChEBI" id="CHEBI:58296"/>
        <dbReference type="ChEBI" id="CHEBI:456216"/>
        <dbReference type="EC" id="2.7.1.50"/>
    </reaction>
</comment>
<comment type="cofactor">
    <cofactor evidence="1">
        <name>Mg(2+)</name>
        <dbReference type="ChEBI" id="CHEBI:18420"/>
    </cofactor>
    <text evidence="1">Binds 1 Mg(2+) ion per subunit.</text>
</comment>
<comment type="pathway">
    <text>Cofactor biosynthesis; thiamine diphosphate biosynthesis; 4-methyl-5-(2-phosphoethyl)-thiazole from 5-(2-hydroxyethyl)-4-methylthiazole: step 1/1.</text>
</comment>
<comment type="pathway">
    <text>Cofactor biosynthesis; thiamine diphosphate biosynthesis; thiamine phosphate from 4-amino-2-methyl-5-diphosphomethylpyrimidine and 4-methyl-5-(2-phosphoethyl)-thiazole: step 1/1.</text>
</comment>
<comment type="induction">
    <text>Repressed by thiamine and 5-(2-hydroxyethyl)-4-methylthiazole.</text>
</comment>
<comment type="similarity">
    <text evidence="2">In the N-terminal section; belongs to the thiamine-phosphate synthase family.</text>
</comment>
<comment type="similarity">
    <text evidence="2">In the C-terminal section; belongs to the Thz kinase family.</text>
</comment>
<keyword id="KW-0067">ATP-binding</keyword>
<keyword id="KW-0418">Kinase</keyword>
<keyword id="KW-0460">Magnesium</keyword>
<keyword id="KW-0479">Metal-binding</keyword>
<keyword id="KW-0511">Multifunctional enzyme</keyword>
<keyword id="KW-0547">Nucleotide-binding</keyword>
<keyword id="KW-1185">Reference proteome</keyword>
<keyword id="KW-0784">Thiamine biosynthesis</keyword>
<keyword id="KW-0808">Transferase</keyword>
<name>THI6_SCHPO</name>
<accession>P40386</accession>
<gene>
    <name type="primary">thi4</name>
    <name type="ORF">SPAC23H4.10c</name>
</gene>
<reference key="1">
    <citation type="journal article" date="1994" name="J. Bacteriol.">
        <title>Cloning, nucleotide sequence, and regulation of Schizosaccharomyces pombe thi4, a thiamine biosynthetic gene.</title>
        <authorList>
            <person name="Zurlinden A."/>
            <person name="Schweingruber M.E."/>
        </authorList>
    </citation>
    <scope>NUCLEOTIDE SEQUENCE [GENOMIC DNA]</scope>
    <source>
        <strain>972 / ATCC 24843</strain>
    </source>
</reference>
<reference key="2">
    <citation type="journal article" date="2002" name="Nature">
        <title>The genome sequence of Schizosaccharomyces pombe.</title>
        <authorList>
            <person name="Wood V."/>
            <person name="Gwilliam R."/>
            <person name="Rajandream M.A."/>
            <person name="Lyne M.H."/>
            <person name="Lyne R."/>
            <person name="Stewart A."/>
            <person name="Sgouros J.G."/>
            <person name="Peat N."/>
            <person name="Hayles J."/>
            <person name="Baker S.G."/>
            <person name="Basham D."/>
            <person name="Bowman S."/>
            <person name="Brooks K."/>
            <person name="Brown D."/>
            <person name="Brown S."/>
            <person name="Chillingworth T."/>
            <person name="Churcher C.M."/>
            <person name="Collins M."/>
            <person name="Connor R."/>
            <person name="Cronin A."/>
            <person name="Davis P."/>
            <person name="Feltwell T."/>
            <person name="Fraser A."/>
            <person name="Gentles S."/>
            <person name="Goble A."/>
            <person name="Hamlin N."/>
            <person name="Harris D.E."/>
            <person name="Hidalgo J."/>
            <person name="Hodgson G."/>
            <person name="Holroyd S."/>
            <person name="Hornsby T."/>
            <person name="Howarth S."/>
            <person name="Huckle E.J."/>
            <person name="Hunt S."/>
            <person name="Jagels K."/>
            <person name="James K.D."/>
            <person name="Jones L."/>
            <person name="Jones M."/>
            <person name="Leather S."/>
            <person name="McDonald S."/>
            <person name="McLean J."/>
            <person name="Mooney P."/>
            <person name="Moule S."/>
            <person name="Mungall K.L."/>
            <person name="Murphy L.D."/>
            <person name="Niblett D."/>
            <person name="Odell C."/>
            <person name="Oliver K."/>
            <person name="O'Neil S."/>
            <person name="Pearson D."/>
            <person name="Quail M.A."/>
            <person name="Rabbinowitsch E."/>
            <person name="Rutherford K.M."/>
            <person name="Rutter S."/>
            <person name="Saunders D."/>
            <person name="Seeger K."/>
            <person name="Sharp S."/>
            <person name="Skelton J."/>
            <person name="Simmonds M.N."/>
            <person name="Squares R."/>
            <person name="Squares S."/>
            <person name="Stevens K."/>
            <person name="Taylor K."/>
            <person name="Taylor R.G."/>
            <person name="Tivey A."/>
            <person name="Walsh S.V."/>
            <person name="Warren T."/>
            <person name="Whitehead S."/>
            <person name="Woodward J.R."/>
            <person name="Volckaert G."/>
            <person name="Aert R."/>
            <person name="Robben J."/>
            <person name="Grymonprez B."/>
            <person name="Weltjens I."/>
            <person name="Vanstreels E."/>
            <person name="Rieger M."/>
            <person name="Schaefer M."/>
            <person name="Mueller-Auer S."/>
            <person name="Gabel C."/>
            <person name="Fuchs M."/>
            <person name="Duesterhoeft A."/>
            <person name="Fritzc C."/>
            <person name="Holzer E."/>
            <person name="Moestl D."/>
            <person name="Hilbert H."/>
            <person name="Borzym K."/>
            <person name="Langer I."/>
            <person name="Beck A."/>
            <person name="Lehrach H."/>
            <person name="Reinhardt R."/>
            <person name="Pohl T.M."/>
            <person name="Eger P."/>
            <person name="Zimmermann W."/>
            <person name="Wedler H."/>
            <person name="Wambutt R."/>
            <person name="Purnelle B."/>
            <person name="Goffeau A."/>
            <person name="Cadieu E."/>
            <person name="Dreano S."/>
            <person name="Gloux S."/>
            <person name="Lelaure V."/>
            <person name="Mottier S."/>
            <person name="Galibert F."/>
            <person name="Aves S.J."/>
            <person name="Xiang Z."/>
            <person name="Hunt C."/>
            <person name="Moore K."/>
            <person name="Hurst S.M."/>
            <person name="Lucas M."/>
            <person name="Rochet M."/>
            <person name="Gaillardin C."/>
            <person name="Tallada V.A."/>
            <person name="Garzon A."/>
            <person name="Thode G."/>
            <person name="Daga R.R."/>
            <person name="Cruzado L."/>
            <person name="Jimenez J."/>
            <person name="Sanchez M."/>
            <person name="del Rey F."/>
            <person name="Benito J."/>
            <person name="Dominguez A."/>
            <person name="Revuelta J.L."/>
            <person name="Moreno S."/>
            <person name="Armstrong J."/>
            <person name="Forsburg S.L."/>
            <person name="Cerutti L."/>
            <person name="Lowe T."/>
            <person name="McCombie W.R."/>
            <person name="Paulsen I."/>
            <person name="Potashkin J."/>
            <person name="Shpakovski G.V."/>
            <person name="Ussery D."/>
            <person name="Barrell B.G."/>
            <person name="Nurse P."/>
        </authorList>
    </citation>
    <scope>NUCLEOTIDE SEQUENCE [LARGE SCALE GENOMIC DNA]</scope>
    <source>
        <strain>972 / ATCC 24843</strain>
    </source>
</reference>
<dbReference type="EC" id="2.5.1.3"/>
<dbReference type="EC" id="2.7.1.50"/>
<dbReference type="EMBL" id="X78824">
    <property type="protein sequence ID" value="CAA55402.1"/>
    <property type="molecule type" value="Genomic_DNA"/>
</dbReference>
<dbReference type="EMBL" id="CU329670">
    <property type="protein sequence ID" value="CAB11664.1"/>
    <property type="molecule type" value="Genomic_DNA"/>
</dbReference>
<dbReference type="PIR" id="S44183">
    <property type="entry name" value="S44183"/>
</dbReference>
<dbReference type="RefSeq" id="NP_593396.1">
    <property type="nucleotide sequence ID" value="NM_001018828.2"/>
</dbReference>
<dbReference type="SMR" id="P40386"/>
<dbReference type="BioGRID" id="278362">
    <property type="interactions" value="17"/>
</dbReference>
<dbReference type="FunCoup" id="P40386">
    <property type="interactions" value="417"/>
</dbReference>
<dbReference type="STRING" id="284812.P40386"/>
<dbReference type="iPTMnet" id="P40386"/>
<dbReference type="PaxDb" id="4896-SPAC23H4.10c.1"/>
<dbReference type="EnsemblFungi" id="SPAC23H4.10c.1">
    <property type="protein sequence ID" value="SPAC23H4.10c.1:pep"/>
    <property type="gene ID" value="SPAC23H4.10c"/>
</dbReference>
<dbReference type="GeneID" id="2541872"/>
<dbReference type="KEGG" id="spo:2541872"/>
<dbReference type="PomBase" id="SPAC23H4.10c">
    <property type="gene designation" value="thi4"/>
</dbReference>
<dbReference type="VEuPathDB" id="FungiDB:SPAC23H4.10c"/>
<dbReference type="eggNOG" id="ENOG502QS2M">
    <property type="taxonomic scope" value="Eukaryota"/>
</dbReference>
<dbReference type="HOGENOM" id="CLU_019943_1_1_1"/>
<dbReference type="InParanoid" id="P40386"/>
<dbReference type="OMA" id="GQTDMPI"/>
<dbReference type="PhylomeDB" id="P40386"/>
<dbReference type="UniPathway" id="UPA00060">
    <property type="reaction ID" value="UER00139"/>
</dbReference>
<dbReference type="UniPathway" id="UPA00060">
    <property type="reaction ID" value="UER00141"/>
</dbReference>
<dbReference type="PRO" id="PR:P40386"/>
<dbReference type="Proteomes" id="UP000002485">
    <property type="component" value="Chromosome I"/>
</dbReference>
<dbReference type="GO" id="GO:0005737">
    <property type="term" value="C:cytoplasm"/>
    <property type="evidence" value="ECO:0007005"/>
    <property type="project" value="PomBase"/>
</dbReference>
<dbReference type="GO" id="GO:0005829">
    <property type="term" value="C:cytosol"/>
    <property type="evidence" value="ECO:0007005"/>
    <property type="project" value="PomBase"/>
</dbReference>
<dbReference type="GO" id="GO:0005524">
    <property type="term" value="F:ATP binding"/>
    <property type="evidence" value="ECO:0007669"/>
    <property type="project" value="UniProtKB-KW"/>
</dbReference>
<dbReference type="GO" id="GO:0004417">
    <property type="term" value="F:hydroxyethylthiazole kinase activity"/>
    <property type="evidence" value="ECO:0000266"/>
    <property type="project" value="PomBase"/>
</dbReference>
<dbReference type="GO" id="GO:0000287">
    <property type="term" value="F:magnesium ion binding"/>
    <property type="evidence" value="ECO:0007669"/>
    <property type="project" value="InterPro"/>
</dbReference>
<dbReference type="GO" id="GO:0004789">
    <property type="term" value="F:thiamine-phosphate diphosphorylase activity"/>
    <property type="evidence" value="ECO:0000318"/>
    <property type="project" value="GO_Central"/>
</dbReference>
<dbReference type="GO" id="GO:0009228">
    <property type="term" value="P:thiamine biosynthetic process"/>
    <property type="evidence" value="ECO:0000318"/>
    <property type="project" value="GO_Central"/>
</dbReference>
<dbReference type="GO" id="GO:0009229">
    <property type="term" value="P:thiamine diphosphate biosynthetic process"/>
    <property type="evidence" value="ECO:0007669"/>
    <property type="project" value="UniProtKB-UniPathway"/>
</dbReference>
<dbReference type="CDD" id="cd01170">
    <property type="entry name" value="THZ_kinase"/>
    <property type="match status" value="1"/>
</dbReference>
<dbReference type="CDD" id="cd00564">
    <property type="entry name" value="TMP_TenI"/>
    <property type="match status" value="1"/>
</dbReference>
<dbReference type="FunFam" id="3.20.20.70:FF:000104">
    <property type="entry name" value="Thiamine biosynthetic bifunctional enzyme"/>
    <property type="match status" value="1"/>
</dbReference>
<dbReference type="Gene3D" id="3.40.1190.20">
    <property type="match status" value="1"/>
</dbReference>
<dbReference type="Gene3D" id="3.20.20.70">
    <property type="entry name" value="Aldolase class I"/>
    <property type="match status" value="1"/>
</dbReference>
<dbReference type="HAMAP" id="MF_00228">
    <property type="entry name" value="Thz_kinase"/>
    <property type="match status" value="1"/>
</dbReference>
<dbReference type="HAMAP" id="MF_00097">
    <property type="entry name" value="TMP_synthase"/>
    <property type="match status" value="1"/>
</dbReference>
<dbReference type="InterPro" id="IPR013785">
    <property type="entry name" value="Aldolase_TIM"/>
</dbReference>
<dbReference type="InterPro" id="IPR000417">
    <property type="entry name" value="Hyethyz_kinase"/>
</dbReference>
<dbReference type="InterPro" id="IPR029056">
    <property type="entry name" value="Ribokinase-like"/>
</dbReference>
<dbReference type="InterPro" id="IPR036206">
    <property type="entry name" value="ThiamineP_synth_sf"/>
</dbReference>
<dbReference type="InterPro" id="IPR022998">
    <property type="entry name" value="ThiamineP_synth_TenI"/>
</dbReference>
<dbReference type="InterPro" id="IPR034291">
    <property type="entry name" value="TMP_synthase"/>
</dbReference>
<dbReference type="NCBIfam" id="NF006830">
    <property type="entry name" value="PRK09355.1"/>
    <property type="match status" value="1"/>
</dbReference>
<dbReference type="NCBIfam" id="TIGR00693">
    <property type="entry name" value="thiE"/>
    <property type="match status" value="1"/>
</dbReference>
<dbReference type="NCBIfam" id="TIGR00694">
    <property type="entry name" value="thiM"/>
    <property type="match status" value="1"/>
</dbReference>
<dbReference type="PANTHER" id="PTHR20857:SF23">
    <property type="entry name" value="THIAMINE BIOSYNTHETIC BIFUNCTIONAL ENZYME"/>
    <property type="match status" value="1"/>
</dbReference>
<dbReference type="PANTHER" id="PTHR20857">
    <property type="entry name" value="THIAMINE-PHOSPHATE PYROPHOSPHORYLASE"/>
    <property type="match status" value="1"/>
</dbReference>
<dbReference type="Pfam" id="PF02110">
    <property type="entry name" value="HK"/>
    <property type="match status" value="1"/>
</dbReference>
<dbReference type="Pfam" id="PF02581">
    <property type="entry name" value="TMP-TENI"/>
    <property type="match status" value="1"/>
</dbReference>
<dbReference type="PRINTS" id="PR01099">
    <property type="entry name" value="HYETHTZKNASE"/>
</dbReference>
<dbReference type="SUPFAM" id="SSF53613">
    <property type="entry name" value="Ribokinase-like"/>
    <property type="match status" value="1"/>
</dbReference>
<dbReference type="SUPFAM" id="SSF51391">
    <property type="entry name" value="Thiamin phosphate synthase"/>
    <property type="match status" value="1"/>
</dbReference>
<organism>
    <name type="scientific">Schizosaccharomyces pombe (strain 972 / ATCC 24843)</name>
    <name type="common">Fission yeast</name>
    <dbReference type="NCBI Taxonomy" id="284812"/>
    <lineage>
        <taxon>Eukaryota</taxon>
        <taxon>Fungi</taxon>
        <taxon>Dikarya</taxon>
        <taxon>Ascomycota</taxon>
        <taxon>Taphrinomycotina</taxon>
        <taxon>Schizosaccharomycetes</taxon>
        <taxon>Schizosaccharomycetales</taxon>
        <taxon>Schizosaccharomycetaceae</taxon>
        <taxon>Schizosaccharomyces</taxon>
    </lineage>
</organism>